<name>BSN_MOUSE</name>
<dbReference type="EMBL" id="Y17034">
    <property type="protein sequence ID" value="CAA76598.1"/>
    <property type="molecule type" value="Genomic_DNA"/>
</dbReference>
<dbReference type="EMBL" id="Y17035">
    <property type="protein sequence ID" value="CAA76598.1"/>
    <property type="status" value="JOINED"/>
    <property type="molecule type" value="Genomic_DNA"/>
</dbReference>
<dbReference type="EMBL" id="Y17036">
    <property type="protein sequence ID" value="CAA76598.1"/>
    <property type="status" value="JOINED"/>
    <property type="molecule type" value="Genomic_DNA"/>
</dbReference>
<dbReference type="EMBL" id="Y17037">
    <property type="protein sequence ID" value="CAA76598.1"/>
    <property type="status" value="JOINED"/>
    <property type="molecule type" value="Genomic_DNA"/>
</dbReference>
<dbReference type="EMBL" id="Y17038">
    <property type="protein sequence ID" value="CAA76598.1"/>
    <property type="status" value="JOINED"/>
    <property type="molecule type" value="Genomic_DNA"/>
</dbReference>
<dbReference type="EMBL" id="AC137678">
    <property type="status" value="NOT_ANNOTATED_CDS"/>
    <property type="molecule type" value="Genomic_DNA"/>
</dbReference>
<dbReference type="EMBL" id="AC168217">
    <property type="status" value="NOT_ANNOTATED_CDS"/>
    <property type="molecule type" value="Genomic_DNA"/>
</dbReference>
<dbReference type="EMBL" id="AK129141">
    <property type="protein sequence ID" value="BAC97951.1"/>
    <property type="molecule type" value="mRNA"/>
</dbReference>
<dbReference type="CCDS" id="CCDS23517.1">
    <molecule id="O88737-1"/>
</dbReference>
<dbReference type="PIR" id="T42730">
    <property type="entry name" value="T42730"/>
</dbReference>
<dbReference type="RefSeq" id="NP_031593.2">
    <molecule id="O88737-1"/>
    <property type="nucleotide sequence ID" value="NM_007567.2"/>
</dbReference>
<dbReference type="RefSeq" id="XP_006511697.1">
    <molecule id="O88737-1"/>
    <property type="nucleotide sequence ID" value="XM_006511634.4"/>
</dbReference>
<dbReference type="SMR" id="O88737"/>
<dbReference type="BioGRID" id="198393">
    <property type="interactions" value="16"/>
</dbReference>
<dbReference type="FunCoup" id="O88737">
    <property type="interactions" value="527"/>
</dbReference>
<dbReference type="IntAct" id="O88737">
    <property type="interactions" value="8"/>
</dbReference>
<dbReference type="MINT" id="O88737"/>
<dbReference type="STRING" id="10090.ENSMUSP00000035208"/>
<dbReference type="GlyCosmos" id="O88737">
    <property type="glycosylation" value="8 sites, No reported glycans"/>
</dbReference>
<dbReference type="GlyGen" id="O88737">
    <property type="glycosylation" value="211 sites, 1 O-linked glycan (202 sites)"/>
</dbReference>
<dbReference type="iPTMnet" id="O88737"/>
<dbReference type="MetOSite" id="O88737"/>
<dbReference type="PhosphoSitePlus" id="O88737"/>
<dbReference type="SwissPalm" id="O88737"/>
<dbReference type="PaxDb" id="10090-ENSMUSP00000035208"/>
<dbReference type="PeptideAtlas" id="O88737"/>
<dbReference type="ProteomicsDB" id="273847">
    <molecule id="O88737-1"/>
</dbReference>
<dbReference type="ProteomicsDB" id="273848">
    <molecule id="O88737-2"/>
</dbReference>
<dbReference type="ABCD" id="O88737">
    <property type="antibodies" value="1 sequenced antibody"/>
</dbReference>
<dbReference type="Antibodypedia" id="13612">
    <property type="antibodies" value="129 antibodies from 23 providers"/>
</dbReference>
<dbReference type="DNASU" id="12217"/>
<dbReference type="Ensembl" id="ENSMUST00000035208.14">
    <molecule id="O88737-1"/>
    <property type="protein sequence ID" value="ENSMUSP00000035208.7"/>
    <property type="gene ID" value="ENSMUSG00000032589.15"/>
</dbReference>
<dbReference type="GeneID" id="12217"/>
<dbReference type="KEGG" id="mmu:12217"/>
<dbReference type="UCSC" id="uc009rov.1">
    <molecule id="O88737-1"/>
    <property type="organism name" value="mouse"/>
</dbReference>
<dbReference type="AGR" id="MGI:1277955"/>
<dbReference type="CTD" id="8927"/>
<dbReference type="MGI" id="MGI:1277955">
    <property type="gene designation" value="Bsn"/>
</dbReference>
<dbReference type="VEuPathDB" id="HostDB:ENSMUSG00000032589"/>
<dbReference type="eggNOG" id="ENOG502QSYS">
    <property type="taxonomic scope" value="Eukaryota"/>
</dbReference>
<dbReference type="GeneTree" id="ENSGT00620000087961"/>
<dbReference type="HOGENOM" id="CLU_000104_1_0_1"/>
<dbReference type="InParanoid" id="O88737"/>
<dbReference type="OMA" id="GMYRPYV"/>
<dbReference type="OrthoDB" id="10059918at2759"/>
<dbReference type="PhylomeDB" id="O88737"/>
<dbReference type="TreeFam" id="TF326082"/>
<dbReference type="BioGRID-ORCS" id="12217">
    <property type="hits" value="3 hits in 76 CRISPR screens"/>
</dbReference>
<dbReference type="CD-CODE" id="CE726F99">
    <property type="entry name" value="Postsynaptic density"/>
</dbReference>
<dbReference type="ChiTaRS" id="Bsn">
    <property type="organism name" value="mouse"/>
</dbReference>
<dbReference type="PRO" id="PR:O88737"/>
<dbReference type="Proteomes" id="UP000000589">
    <property type="component" value="Chromosome 9"/>
</dbReference>
<dbReference type="RNAct" id="O88737">
    <property type="molecule type" value="protein"/>
</dbReference>
<dbReference type="Bgee" id="ENSMUSG00000032589">
    <property type="expression patterns" value="Expressed in subiculum and 108 other cell types or tissues"/>
</dbReference>
<dbReference type="ExpressionAtlas" id="O88737">
    <property type="expression patterns" value="baseline and differential"/>
</dbReference>
<dbReference type="GO" id="GO:0030424">
    <property type="term" value="C:axon"/>
    <property type="evidence" value="ECO:0000314"/>
    <property type="project" value="MGI"/>
</dbReference>
<dbReference type="GO" id="GO:0009986">
    <property type="term" value="C:cell surface"/>
    <property type="evidence" value="ECO:0000314"/>
    <property type="project" value="CACAO"/>
</dbReference>
<dbReference type="GO" id="GO:0098683">
    <property type="term" value="C:cochlear hair cell ribbon synapse"/>
    <property type="evidence" value="ECO:0000314"/>
    <property type="project" value="SynGO"/>
</dbReference>
<dbReference type="GO" id="GO:0005856">
    <property type="term" value="C:cytoskeleton"/>
    <property type="evidence" value="ECO:0007669"/>
    <property type="project" value="UniProtKB-SubCell"/>
</dbReference>
<dbReference type="GO" id="GO:0005829">
    <property type="term" value="C:cytosol"/>
    <property type="evidence" value="ECO:0000304"/>
    <property type="project" value="Reactome"/>
</dbReference>
<dbReference type="GO" id="GO:0030425">
    <property type="term" value="C:dendrite"/>
    <property type="evidence" value="ECO:0000314"/>
    <property type="project" value="BHF-UCL"/>
</dbReference>
<dbReference type="GO" id="GO:0060076">
    <property type="term" value="C:excitatory synapse"/>
    <property type="evidence" value="ECO:0000250"/>
    <property type="project" value="ParkinsonsUK-UCL"/>
</dbReference>
<dbReference type="GO" id="GO:0019898">
    <property type="term" value="C:extrinsic component of membrane"/>
    <property type="evidence" value="ECO:0000266"/>
    <property type="project" value="MGI"/>
</dbReference>
<dbReference type="GO" id="GO:0098982">
    <property type="term" value="C:GABA-ergic synapse"/>
    <property type="evidence" value="ECO:0000314"/>
    <property type="project" value="SynGO"/>
</dbReference>
<dbReference type="GO" id="GO:0098978">
    <property type="term" value="C:glutamatergic synapse"/>
    <property type="evidence" value="ECO:0000314"/>
    <property type="project" value="SynGO"/>
</dbReference>
<dbReference type="GO" id="GO:0044306">
    <property type="term" value="C:neuron projection terminus"/>
    <property type="evidence" value="ECO:0000314"/>
    <property type="project" value="MGI"/>
</dbReference>
<dbReference type="GO" id="GO:0014069">
    <property type="term" value="C:postsynaptic density"/>
    <property type="evidence" value="ECO:0000314"/>
    <property type="project" value="MGI"/>
</dbReference>
<dbReference type="GO" id="GO:0098793">
    <property type="term" value="C:presynapse"/>
    <property type="evidence" value="ECO:0000314"/>
    <property type="project" value="MGI"/>
</dbReference>
<dbReference type="GO" id="GO:0048786">
    <property type="term" value="C:presynaptic active zone"/>
    <property type="evidence" value="ECO:0000314"/>
    <property type="project" value="MGI"/>
</dbReference>
<dbReference type="GO" id="GO:0098685">
    <property type="term" value="C:Schaffer collateral - CA1 synapse"/>
    <property type="evidence" value="ECO:0000314"/>
    <property type="project" value="SynGO"/>
</dbReference>
<dbReference type="GO" id="GO:0045202">
    <property type="term" value="C:synapse"/>
    <property type="evidence" value="ECO:0000314"/>
    <property type="project" value="MGI"/>
</dbReference>
<dbReference type="GO" id="GO:0008021">
    <property type="term" value="C:synaptic vesicle"/>
    <property type="evidence" value="ECO:0000250"/>
    <property type="project" value="UniProtKB"/>
</dbReference>
<dbReference type="GO" id="GO:0004857">
    <property type="term" value="F:enzyme inhibitor activity"/>
    <property type="evidence" value="ECO:0000250"/>
    <property type="project" value="UniProtKB"/>
</dbReference>
<dbReference type="GO" id="GO:0098882">
    <property type="term" value="F:structural constituent of presynaptic active zone"/>
    <property type="evidence" value="ECO:0000314"/>
    <property type="project" value="SynGO"/>
</dbReference>
<dbReference type="GO" id="GO:0008270">
    <property type="term" value="F:zinc ion binding"/>
    <property type="evidence" value="ECO:0007669"/>
    <property type="project" value="UniProtKB-KW"/>
</dbReference>
<dbReference type="GO" id="GO:0050804">
    <property type="term" value="P:modulation of chemical synaptic transmission"/>
    <property type="evidence" value="ECO:0000250"/>
    <property type="project" value="UniProtKB"/>
</dbReference>
<dbReference type="GO" id="GO:0035418">
    <property type="term" value="P:protein localization to synapse"/>
    <property type="evidence" value="ECO:0000316"/>
    <property type="project" value="ParkinsonsUK-UCL"/>
</dbReference>
<dbReference type="GO" id="GO:0098693">
    <property type="term" value="P:regulation of synaptic vesicle cycle"/>
    <property type="evidence" value="ECO:0000314"/>
    <property type="project" value="SynGO"/>
</dbReference>
<dbReference type="GO" id="GO:0097091">
    <property type="term" value="P:synaptic vesicle clustering"/>
    <property type="evidence" value="ECO:0000314"/>
    <property type="project" value="SynGO"/>
</dbReference>
<dbReference type="CDD" id="cd15773">
    <property type="entry name" value="FYVE1_BSN"/>
    <property type="match status" value="1"/>
</dbReference>
<dbReference type="CDD" id="cd15772">
    <property type="entry name" value="FYVE2_BSN_PCLO"/>
    <property type="match status" value="1"/>
</dbReference>
<dbReference type="FunFam" id="3.30.40.10:FF:000326">
    <property type="entry name" value="Bassoon presynaptic cytomatrix protein"/>
    <property type="match status" value="1"/>
</dbReference>
<dbReference type="Gene3D" id="3.30.40.10">
    <property type="entry name" value="Zinc/RING finger domain, C3HC4 (zinc finger)"/>
    <property type="match status" value="2"/>
</dbReference>
<dbReference type="InterPro" id="IPR030627">
    <property type="entry name" value="Bsn_FYVE_dom"/>
</dbReference>
<dbReference type="InterPro" id="IPR052098">
    <property type="entry name" value="Presynaptic_Scaffold_Bsn/Pclo"/>
</dbReference>
<dbReference type="InterPro" id="IPR011011">
    <property type="entry name" value="Znf_FYVE_PHD"/>
</dbReference>
<dbReference type="InterPro" id="IPR008899">
    <property type="entry name" value="Znf_piccolo"/>
</dbReference>
<dbReference type="InterPro" id="IPR013083">
    <property type="entry name" value="Znf_RING/FYVE/PHD"/>
</dbReference>
<dbReference type="PANTHER" id="PTHR14113">
    <property type="entry name" value="PICCOLO/BASSOON"/>
    <property type="match status" value="1"/>
</dbReference>
<dbReference type="PANTHER" id="PTHR14113:SF1">
    <property type="entry name" value="PROTEIN BASSOON"/>
    <property type="match status" value="1"/>
</dbReference>
<dbReference type="Pfam" id="PF05715">
    <property type="entry name" value="zf-piccolo"/>
    <property type="match status" value="2"/>
</dbReference>
<dbReference type="SUPFAM" id="SSF57903">
    <property type="entry name" value="FYVE/PHD zinc finger"/>
    <property type="match status" value="2"/>
</dbReference>
<reference key="1">
    <citation type="journal article" date="1998" name="J. Cell Biol.">
        <title>Bassoon, a novel zinc-finger CAG/Glutamine-repeat protein selectively localized at the active zone of presynaptic nerve terminals.</title>
        <authorList>
            <person name="tom Dieck S."/>
            <person name="Sanmarti-Vila L."/>
            <person name="Langnaese K."/>
            <person name="Richter K."/>
            <person name="Kindler S."/>
            <person name="Soyke A."/>
            <person name="Wex H."/>
            <person name="Smalla K.-H."/>
            <person name="Kaempf U."/>
            <person name="Fraenzer J.-T."/>
            <person name="Stumm M."/>
            <person name="Garner C.C."/>
            <person name="Gundelfinger E.D."/>
        </authorList>
    </citation>
    <scope>NUCLEOTIDE SEQUENCE [GENOMIC DNA] (ISOFORM 1)</scope>
    <source>
        <strain>129/SvJ</strain>
    </source>
</reference>
<reference key="2">
    <citation type="journal article" date="2009" name="PLoS Biol.">
        <title>Lineage-specific biology revealed by a finished genome assembly of the mouse.</title>
        <authorList>
            <person name="Church D.M."/>
            <person name="Goodstadt L."/>
            <person name="Hillier L.W."/>
            <person name="Zody M.C."/>
            <person name="Goldstein S."/>
            <person name="She X."/>
            <person name="Bult C.J."/>
            <person name="Agarwala R."/>
            <person name="Cherry J.L."/>
            <person name="DiCuccio M."/>
            <person name="Hlavina W."/>
            <person name="Kapustin Y."/>
            <person name="Meric P."/>
            <person name="Maglott D."/>
            <person name="Birtle Z."/>
            <person name="Marques A.C."/>
            <person name="Graves T."/>
            <person name="Zhou S."/>
            <person name="Teague B."/>
            <person name="Potamousis K."/>
            <person name="Churas C."/>
            <person name="Place M."/>
            <person name="Herschleb J."/>
            <person name="Runnheim R."/>
            <person name="Forrest D."/>
            <person name="Amos-Landgraf J."/>
            <person name="Schwartz D.C."/>
            <person name="Cheng Z."/>
            <person name="Lindblad-Toh K."/>
            <person name="Eichler E.E."/>
            <person name="Ponting C.P."/>
        </authorList>
    </citation>
    <scope>NUCLEOTIDE SEQUENCE [LARGE SCALE GENOMIC DNA]</scope>
    <source>
        <strain>C57BL/6J</strain>
    </source>
</reference>
<reference key="3">
    <citation type="journal article" date="2003" name="DNA Res.">
        <title>Prediction of the coding sequences of mouse homologues of KIAA gene: III. The complete nucleotide sequences of 500 mouse KIAA-homologous cDNAs identified by screening of terminal sequences of cDNA clones randomly sampled from size-fractionated libraries.</title>
        <authorList>
            <person name="Okazaki N."/>
            <person name="Kikuno R."/>
            <person name="Ohara R."/>
            <person name="Inamoto S."/>
            <person name="Koseki H."/>
            <person name="Hiraoka S."/>
            <person name="Saga Y."/>
            <person name="Nagase T."/>
            <person name="Ohara O."/>
            <person name="Koga H."/>
        </authorList>
    </citation>
    <scope>NUCLEOTIDE SEQUENCE [LARGE SCALE MRNA] OF 2714-3942 (ISOFORM 2)</scope>
    <source>
        <tissue>Brain</tissue>
    </source>
</reference>
<reference key="4">
    <citation type="journal article" date="2003" name="Neuron">
        <title>The presynaptic active zone protein bassoon is essential for photoreceptor ribbon synapse formation in the retina.</title>
        <authorList>
            <person name="Dick O."/>
            <person name="tom Dieck S."/>
            <person name="Altrock W.D."/>
            <person name="Ammermueller J."/>
            <person name="Weiler R."/>
            <person name="Garner C.C."/>
            <person name="Gundelfinger E.D."/>
            <person name="Brandstaetter J.H."/>
        </authorList>
    </citation>
    <scope>FUNCTION</scope>
    <scope>SUBCELLULAR LOCATION</scope>
    <scope>TISSUE SPECIFICITY</scope>
    <scope>DISRUPTION PHENOTYPE</scope>
</reference>
<reference key="5">
    <citation type="journal article" date="2003" name="Neuron">
        <title>Functional inactivation of a fraction of excitatory synapses in mice deficient for the active zone protein bassoon.</title>
        <authorList>
            <person name="Altrock W.D."/>
            <person name="tom Dieck S."/>
            <person name="Sokolov M."/>
            <person name="Meyer A.C."/>
            <person name="Sigler A."/>
            <person name="Brakebusch C."/>
            <person name="Faessler R."/>
            <person name="Richter K."/>
            <person name="Boeckers T.M."/>
            <person name="Potschka H."/>
            <person name="Brandt C."/>
            <person name="Loescher W."/>
            <person name="Grimberg D."/>
            <person name="Dresbach T."/>
            <person name="Hempelmann A."/>
            <person name="Hassan H."/>
            <person name="Balschun D."/>
            <person name="Frey J.U."/>
            <person name="Brandstaetter J.H."/>
            <person name="Garner C.C."/>
            <person name="Rosenmund C."/>
            <person name="Gundelfinger E.D."/>
        </authorList>
    </citation>
    <scope>FUNCTION</scope>
    <scope>SUBCELLULAR LOCATION</scope>
    <scope>TISSUE SPECIFICITY</scope>
</reference>
<reference key="6">
    <citation type="journal article" date="2006" name="Mol. Cell. Proteomics">
        <title>Comprehensive identification of phosphorylation sites in postsynaptic density preparations.</title>
        <authorList>
            <person name="Trinidad J.C."/>
            <person name="Specht C.G."/>
            <person name="Thalhammer A."/>
            <person name="Schoepfer R."/>
            <person name="Burlingame A.L."/>
        </authorList>
    </citation>
    <scope>PHOSPHORYLATION [LARGE SCALE ANALYSIS] AT SER-1108; SER-1236; SER-2578; THR-2595; THR-2622 AND SER-3382</scope>
    <scope>IDENTIFICATION BY MASS SPECTROMETRY [LARGE SCALE ANALYSIS]</scope>
    <source>
        <tissue>Brain</tissue>
    </source>
</reference>
<reference key="7">
    <citation type="journal article" date="2006" name="Mol. Cell. Proteomics">
        <title>O-linked N-acetylglucosamine proteomics of postsynaptic density preparations using lectin weak affinity chromatography and mass spectrometry.</title>
        <authorList>
            <person name="Vosseller K."/>
            <person name="Trinidad J.C."/>
            <person name="Chalkley R.J."/>
            <person name="Specht C.G."/>
            <person name="Thalhammer A."/>
            <person name="Lynn A.J."/>
            <person name="Snedecor J.O."/>
            <person name="Guan S."/>
            <person name="Medzihradszky K.F."/>
            <person name="Maltby D.A."/>
            <person name="Schoepfer R."/>
            <person name="Burlingame A.L."/>
        </authorList>
    </citation>
    <scope>GLYCOSYLATION [LARGE SCALE ANALYSIS] AT THR-1395; SER-1707; THR-1934; THR-2318; THR-2524; THR-2700 AND THR-2945</scope>
    <source>
        <tissue>Brain</tissue>
    </source>
</reference>
<reference key="8">
    <citation type="journal article" date="2007" name="FEBS Lett.">
        <title>Mover is a novel vertebrate-specific presynaptic protein with differential distribution at subsets of CNS synapses.</title>
        <authorList>
            <person name="Kremer T."/>
            <person name="Kempf C."/>
            <person name="Wittenmayer N."/>
            <person name="Nawrotzki R."/>
            <person name="Kuner T."/>
            <person name="Kirsch J."/>
            <person name="Dresbach T."/>
        </authorList>
    </citation>
    <scope>INTERACTION WITH TPRG1L</scope>
    <source>
        <tissue>Brain</tissue>
    </source>
</reference>
<reference key="9">
    <citation type="journal article" date="2007" name="Mol. Cell. Proteomics">
        <title>Qualitative and quantitative analyses of protein phosphorylation in naive and stimulated mouse synaptosomal preparations.</title>
        <authorList>
            <person name="Munton R.P."/>
            <person name="Tweedie-Cullen R."/>
            <person name="Livingstone-Zatchej M."/>
            <person name="Weinandy F."/>
            <person name="Waidelich M."/>
            <person name="Longo D."/>
            <person name="Gehrig P."/>
            <person name="Potthast F."/>
            <person name="Rutishauser D."/>
            <person name="Gerrits B."/>
            <person name="Panse C."/>
            <person name="Schlapbach R."/>
            <person name="Mansuy I.M."/>
        </authorList>
    </citation>
    <scope>IDENTIFICATION BY MASS SPECTROMETRY [LARGE SCALE ANALYSIS]</scope>
    <source>
        <tissue>Brain cortex</tissue>
    </source>
</reference>
<reference key="10">
    <citation type="journal article" date="2009" name="J. Neurosci.">
        <title>A protein interaction node at the neurotransmitter release site: domains of Aczonin/Piccolo, Bassoon, CAST, and rim converge on the N-terminal domain of Munc13-1.</title>
        <authorList>
            <person name="Wang X."/>
            <person name="Hu B."/>
            <person name="Zieba A."/>
            <person name="Neumann N.G."/>
            <person name="Kasper-Sonnenberg M."/>
            <person name="Honsbein A."/>
            <person name="Hultqvist G."/>
            <person name="Conze T."/>
            <person name="Witt W."/>
            <person name="Limbach C."/>
            <person name="Geitmann M."/>
            <person name="Danielson H."/>
            <person name="Kolarow R."/>
            <person name="Niemann G."/>
            <person name="Lessmann V."/>
            <person name="Kilimann M.W."/>
        </authorList>
    </citation>
    <scope>FUNCTION</scope>
    <scope>INTERACTION WITH PCLO</scope>
    <scope>ERC2/CAST1</scope>
    <scope>RIMS1 AND UNC13A</scope>
    <scope>TISSUE SPECIFICITY</scope>
</reference>
<reference key="11">
    <citation type="journal article" date="2010" name="Cell">
        <title>A tissue-specific atlas of mouse protein phosphorylation and expression.</title>
        <authorList>
            <person name="Huttlin E.L."/>
            <person name="Jedrychowski M.P."/>
            <person name="Elias J.E."/>
            <person name="Goswami T."/>
            <person name="Rad R."/>
            <person name="Beausoleil S.A."/>
            <person name="Villen J."/>
            <person name="Haas W."/>
            <person name="Sowa M.E."/>
            <person name="Gygi S.P."/>
        </authorList>
    </citation>
    <scope>PHOSPHORYLATION [LARGE SCALE ANALYSIS] AT SER-142; SER-241; SER-245; SER-980; SER-1050; SER-1051; SER-1100; THR-1102; SER-1108; SER-1114; SER-1236; SER-1482; SER-1491; SER-1493; SER-1990; SER-2046; SER-2578; THR-2595; THR-2622; SER-2811; SER-2860; SER-2866; SER-3022; SER-3301 AND SER-3382</scope>
    <scope>IDENTIFICATION BY MASS SPECTROMETRY [LARGE SCALE ANALYSIS]</scope>
    <source>
        <tissue>Brain</tissue>
    </source>
</reference>
<reference key="12">
    <citation type="journal article" date="2014" name="Mol. Cell. Proteomics">
        <title>Immunoaffinity enrichment and mass spectrometry analysis of protein methylation.</title>
        <authorList>
            <person name="Guo A."/>
            <person name="Gu H."/>
            <person name="Zhou J."/>
            <person name="Mulhern D."/>
            <person name="Wang Y."/>
            <person name="Lee K.A."/>
            <person name="Yang V."/>
            <person name="Aguiar M."/>
            <person name="Kornhauser J."/>
            <person name="Jia X."/>
            <person name="Ren J."/>
            <person name="Beausoleil S.A."/>
            <person name="Silva J.C."/>
            <person name="Vemulapalli V."/>
            <person name="Bedford M.T."/>
            <person name="Comb M.J."/>
        </authorList>
    </citation>
    <scope>METHYLATION [LARGE SCALE ANALYSIS] AT ARG-145; ARG-881; ARG-1792; ARG-1796; ARG-1806; ARG-1818; ARG-2051; ARG-2081; ARG-2255; ARG-2265; ARG-2270; ARG-3502 AND ARG-3823</scope>
    <scope>IDENTIFICATION BY MASS SPECTROMETRY [LARGE SCALE ANALYSIS]</scope>
    <source>
        <tissue>Brain</tissue>
    </source>
</reference>
<reference key="13">
    <citation type="journal article" date="2017" name="Neuron">
        <title>Bassoon Controls Presynaptic Autophagy through Atg5.</title>
        <authorList>
            <person name="Okerlund N.D."/>
            <person name="Schneider K."/>
            <person name="Leal-Ortiz S."/>
            <person name="Montenegro-Venegas C."/>
            <person name="Kim S.A."/>
            <person name="Garner L.C."/>
            <person name="Waites C.L."/>
            <person name="Gundelfinger E.D."/>
            <person name="Reimer R.J."/>
            <person name="Garner C.C."/>
        </authorList>
    </citation>
    <scope>FUNCTION</scope>
    <scope>INTERACTION WITH ATG5</scope>
    <scope>DISRUPTION PHENOTYPE</scope>
</reference>
<feature type="initiator methionine" description="Removed" evidence="3">
    <location>
        <position position="1"/>
    </location>
</feature>
<feature type="chain" id="PRO_0000065003" description="Protein bassoon">
    <location>
        <begin position="2"/>
        <end position="3942"/>
    </location>
</feature>
<feature type="repeat" description="1">
    <location>
        <begin position="570"/>
        <end position="576"/>
    </location>
</feature>
<feature type="repeat" description="2">
    <location>
        <begin position="577"/>
        <end position="583"/>
    </location>
</feature>
<feature type="repeat" description="3">
    <location>
        <begin position="584"/>
        <end position="590"/>
    </location>
</feature>
<feature type="repeat" description="4">
    <location>
        <begin position="591"/>
        <end position="597"/>
    </location>
</feature>
<feature type="repeat" description="5">
    <location>
        <begin position="598"/>
        <end position="604"/>
    </location>
</feature>
<feature type="zinc finger region" description="C4-type" evidence="5">
    <location>
        <begin position="167"/>
        <end position="190"/>
    </location>
</feature>
<feature type="zinc finger region" description="C4-type" evidence="5">
    <location>
        <begin position="195"/>
        <end position="217"/>
    </location>
</feature>
<feature type="zinc finger region" description="C4-type" evidence="5">
    <location>
        <begin position="464"/>
        <end position="487"/>
    </location>
</feature>
<feature type="zinc finger region" description="C4-type" evidence="5">
    <location>
        <begin position="492"/>
        <end position="514"/>
    </location>
</feature>
<feature type="region of interest" description="Disordered" evidence="6">
    <location>
        <begin position="1"/>
        <end position="158"/>
    </location>
</feature>
<feature type="region of interest" description="5 X 2 AA tandem repeats of P-G">
    <location>
        <begin position="62"/>
        <end position="71"/>
    </location>
</feature>
<feature type="region of interest" description="Disordered" evidence="6">
    <location>
        <begin position="228"/>
        <end position="341"/>
    </location>
</feature>
<feature type="region of interest" description="Disordered" evidence="6">
    <location>
        <begin position="362"/>
        <end position="457"/>
    </location>
</feature>
<feature type="region of interest" description="Disordered" evidence="6">
    <location>
        <begin position="525"/>
        <end position="937"/>
    </location>
</feature>
<feature type="region of interest" description="5 X 7 AA tandem repeats of K-A-S-P-Q-[AT]-[AT]">
    <location>
        <begin position="570"/>
        <end position="604"/>
    </location>
</feature>
<feature type="region of interest" description="Disordered" evidence="6">
    <location>
        <begin position="950"/>
        <end position="1258"/>
    </location>
</feature>
<feature type="region of interest" description="Disordered" evidence="6">
    <location>
        <begin position="1309"/>
        <end position="1553"/>
    </location>
</feature>
<feature type="region of interest" description="Disordered" evidence="6">
    <location>
        <begin position="1573"/>
        <end position="1625"/>
    </location>
</feature>
<feature type="region of interest" description="Disordered" evidence="6">
    <location>
        <begin position="1831"/>
        <end position="1865"/>
    </location>
</feature>
<feature type="region of interest" description="Disordered" evidence="6">
    <location>
        <begin position="1926"/>
        <end position="1977"/>
    </location>
</feature>
<feature type="region of interest" description="Disordered" evidence="6">
    <location>
        <begin position="2327"/>
        <end position="2378"/>
    </location>
</feature>
<feature type="region of interest" description="Disordered" evidence="6">
    <location>
        <begin position="2476"/>
        <end position="2504"/>
    </location>
</feature>
<feature type="region of interest" description="Disordered" evidence="6">
    <location>
        <begin position="2524"/>
        <end position="2663"/>
    </location>
</feature>
<feature type="region of interest" description="Interaction with DAO" evidence="3">
    <location>
        <begin position="2730"/>
        <end position="3278"/>
    </location>
</feature>
<feature type="region of interest" description="Disordered" evidence="6">
    <location>
        <begin position="2854"/>
        <end position="2874"/>
    </location>
</feature>
<feature type="region of interest" description="Disordered" evidence="6">
    <location>
        <begin position="3051"/>
        <end position="3409"/>
    </location>
</feature>
<feature type="region of interest" description="Disordered" evidence="6">
    <location>
        <begin position="3431"/>
        <end position="3560"/>
    </location>
</feature>
<feature type="region of interest" description="Disordered" evidence="6">
    <location>
        <begin position="3581"/>
        <end position="3917"/>
    </location>
</feature>
<feature type="coiled-coil region" evidence="5">
    <location>
        <begin position="2366"/>
        <end position="2422"/>
    </location>
</feature>
<feature type="coiled-coil region" evidence="5">
    <location>
        <begin position="2453"/>
        <end position="2483"/>
    </location>
</feature>
<feature type="compositionally biased region" description="Gly residues" evidence="6">
    <location>
        <begin position="9"/>
        <end position="29"/>
    </location>
</feature>
<feature type="compositionally biased region" description="Low complexity" evidence="6">
    <location>
        <begin position="31"/>
        <end position="52"/>
    </location>
</feature>
<feature type="compositionally biased region" description="Pro residues" evidence="6">
    <location>
        <begin position="53"/>
        <end position="71"/>
    </location>
</feature>
<feature type="compositionally biased region" description="Polar residues" evidence="6">
    <location>
        <begin position="85"/>
        <end position="98"/>
    </location>
</feature>
<feature type="compositionally biased region" description="Polar residues" evidence="6">
    <location>
        <begin position="127"/>
        <end position="154"/>
    </location>
</feature>
<feature type="compositionally biased region" description="Polar residues" evidence="6">
    <location>
        <begin position="230"/>
        <end position="240"/>
    </location>
</feature>
<feature type="compositionally biased region" description="Polar residues" evidence="6">
    <location>
        <begin position="362"/>
        <end position="379"/>
    </location>
</feature>
<feature type="compositionally biased region" description="Pro residues" evidence="6">
    <location>
        <begin position="395"/>
        <end position="407"/>
    </location>
</feature>
<feature type="compositionally biased region" description="Pro residues" evidence="6">
    <location>
        <begin position="528"/>
        <end position="541"/>
    </location>
</feature>
<feature type="compositionally biased region" description="Polar residues" evidence="6">
    <location>
        <begin position="573"/>
        <end position="600"/>
    </location>
</feature>
<feature type="compositionally biased region" description="Pro residues" evidence="6">
    <location>
        <begin position="632"/>
        <end position="645"/>
    </location>
</feature>
<feature type="compositionally biased region" description="Polar residues" evidence="6">
    <location>
        <begin position="684"/>
        <end position="693"/>
    </location>
</feature>
<feature type="compositionally biased region" description="Low complexity" evidence="6">
    <location>
        <begin position="694"/>
        <end position="708"/>
    </location>
</feature>
<feature type="compositionally biased region" description="Polar residues" evidence="6">
    <location>
        <begin position="709"/>
        <end position="718"/>
    </location>
</feature>
<feature type="compositionally biased region" description="Acidic residues" evidence="6">
    <location>
        <begin position="787"/>
        <end position="802"/>
    </location>
</feature>
<feature type="compositionally biased region" description="Acidic residues" evidence="6">
    <location>
        <begin position="865"/>
        <end position="876"/>
    </location>
</feature>
<feature type="compositionally biased region" description="Basic and acidic residues" evidence="6">
    <location>
        <begin position="895"/>
        <end position="905"/>
    </location>
</feature>
<feature type="compositionally biased region" description="Low complexity" evidence="6">
    <location>
        <begin position="994"/>
        <end position="1011"/>
    </location>
</feature>
<feature type="compositionally biased region" description="Acidic residues" evidence="6">
    <location>
        <begin position="1049"/>
        <end position="1062"/>
    </location>
</feature>
<feature type="compositionally biased region" description="Basic and acidic residues" evidence="6">
    <location>
        <begin position="1063"/>
        <end position="1076"/>
    </location>
</feature>
<feature type="compositionally biased region" description="Basic and acidic residues" evidence="6">
    <location>
        <begin position="1117"/>
        <end position="1132"/>
    </location>
</feature>
<feature type="compositionally biased region" description="Low complexity" evidence="6">
    <location>
        <begin position="1133"/>
        <end position="1143"/>
    </location>
</feature>
<feature type="compositionally biased region" description="Low complexity" evidence="6">
    <location>
        <begin position="1173"/>
        <end position="1190"/>
    </location>
</feature>
<feature type="compositionally biased region" description="Basic and acidic residues" evidence="6">
    <location>
        <begin position="1192"/>
        <end position="1207"/>
    </location>
</feature>
<feature type="compositionally biased region" description="Low complexity" evidence="6">
    <location>
        <begin position="1209"/>
        <end position="1219"/>
    </location>
</feature>
<feature type="compositionally biased region" description="Polar residues" evidence="6">
    <location>
        <begin position="1226"/>
        <end position="1240"/>
    </location>
</feature>
<feature type="compositionally biased region" description="Low complexity" evidence="6">
    <location>
        <begin position="1333"/>
        <end position="1343"/>
    </location>
</feature>
<feature type="compositionally biased region" description="Basic and acidic residues" evidence="6">
    <location>
        <begin position="1357"/>
        <end position="1366"/>
    </location>
</feature>
<feature type="compositionally biased region" description="Polar residues" evidence="6">
    <location>
        <begin position="1370"/>
        <end position="1438"/>
    </location>
</feature>
<feature type="compositionally biased region" description="Low complexity" evidence="6">
    <location>
        <begin position="1488"/>
        <end position="1498"/>
    </location>
</feature>
<feature type="compositionally biased region" description="Polar residues" evidence="6">
    <location>
        <begin position="1508"/>
        <end position="1522"/>
    </location>
</feature>
<feature type="compositionally biased region" description="Polar residues" evidence="6">
    <location>
        <begin position="1573"/>
        <end position="1609"/>
    </location>
</feature>
<feature type="compositionally biased region" description="Basic and acidic residues" evidence="6">
    <location>
        <begin position="1844"/>
        <end position="1856"/>
    </location>
</feature>
<feature type="compositionally biased region" description="Pro residues" evidence="6">
    <location>
        <begin position="2329"/>
        <end position="2342"/>
    </location>
</feature>
<feature type="compositionally biased region" description="Basic and acidic residues" evidence="6">
    <location>
        <begin position="2361"/>
        <end position="2378"/>
    </location>
</feature>
<feature type="compositionally biased region" description="Polar residues" evidence="6">
    <location>
        <begin position="2541"/>
        <end position="2551"/>
    </location>
</feature>
<feature type="compositionally biased region" description="Basic and acidic residues" evidence="6">
    <location>
        <begin position="2643"/>
        <end position="2655"/>
    </location>
</feature>
<feature type="compositionally biased region" description="Polar residues" evidence="6">
    <location>
        <begin position="3073"/>
        <end position="3083"/>
    </location>
</feature>
<feature type="compositionally biased region" description="Low complexity" evidence="6">
    <location>
        <begin position="3089"/>
        <end position="3114"/>
    </location>
</feature>
<feature type="compositionally biased region" description="Basic and acidic residues" evidence="6">
    <location>
        <begin position="3202"/>
        <end position="3211"/>
    </location>
</feature>
<feature type="compositionally biased region" description="Polar residues" evidence="6">
    <location>
        <begin position="3212"/>
        <end position="3237"/>
    </location>
</feature>
<feature type="compositionally biased region" description="Basic and acidic residues" evidence="6">
    <location>
        <begin position="3330"/>
        <end position="3342"/>
    </location>
</feature>
<feature type="compositionally biased region" description="Basic and acidic residues" evidence="6">
    <location>
        <begin position="3372"/>
        <end position="3391"/>
    </location>
</feature>
<feature type="compositionally biased region" description="Low complexity" evidence="6">
    <location>
        <begin position="3447"/>
        <end position="3461"/>
    </location>
</feature>
<feature type="compositionally biased region" description="Basic and acidic residues" evidence="6">
    <location>
        <begin position="3464"/>
        <end position="3487"/>
    </location>
</feature>
<feature type="compositionally biased region" description="Low complexity" evidence="6">
    <location>
        <begin position="3520"/>
        <end position="3534"/>
    </location>
</feature>
<feature type="compositionally biased region" description="Basic and acidic residues" evidence="6">
    <location>
        <begin position="3549"/>
        <end position="3560"/>
    </location>
</feature>
<feature type="compositionally biased region" description="Basic and acidic residues" evidence="6">
    <location>
        <begin position="3592"/>
        <end position="3602"/>
    </location>
</feature>
<feature type="compositionally biased region" description="Basic residues" evidence="6">
    <location>
        <begin position="3652"/>
        <end position="3665"/>
    </location>
</feature>
<feature type="compositionally biased region" description="Basic and acidic residues" evidence="6">
    <location>
        <begin position="3666"/>
        <end position="3690"/>
    </location>
</feature>
<feature type="compositionally biased region" description="Low complexity" evidence="6">
    <location>
        <begin position="3750"/>
        <end position="3820"/>
    </location>
</feature>
<feature type="compositionally biased region" description="Pro residues" evidence="6">
    <location>
        <begin position="3835"/>
        <end position="3851"/>
    </location>
</feature>
<feature type="compositionally biased region" description="Low complexity" evidence="6">
    <location>
        <begin position="3856"/>
        <end position="3891"/>
    </location>
</feature>
<feature type="modified residue" description="Phosphoserine" evidence="18">
    <location>
        <position position="142"/>
    </location>
</feature>
<feature type="modified residue" description="Omega-N-methylarginine" evidence="19">
    <location>
        <position position="145"/>
    </location>
</feature>
<feature type="modified residue" description="Phosphoserine" evidence="18">
    <location>
        <position position="241"/>
    </location>
</feature>
<feature type="modified residue" description="Phosphoserine" evidence="18">
    <location>
        <position position="245"/>
    </location>
</feature>
<feature type="modified residue" description="Omega-N-methylarginine" evidence="19">
    <location>
        <position position="881"/>
    </location>
</feature>
<feature type="modified residue" description="Phosphoserine" evidence="18">
    <location>
        <position position="980"/>
    </location>
</feature>
<feature type="modified residue" description="Phosphoserine" evidence="18">
    <location>
        <position position="1050"/>
    </location>
</feature>
<feature type="modified residue" description="Phosphoserine" evidence="18">
    <location>
        <position position="1051"/>
    </location>
</feature>
<feature type="modified residue" description="Phosphoserine" evidence="18">
    <location>
        <position position="1100"/>
    </location>
</feature>
<feature type="modified residue" description="Phosphothreonine" evidence="18">
    <location>
        <position position="1102"/>
    </location>
</feature>
<feature type="modified residue" description="Phosphoserine" evidence="17 18">
    <location>
        <position position="1108"/>
    </location>
</feature>
<feature type="modified residue" description="Phosphoserine" evidence="18">
    <location>
        <position position="1114"/>
    </location>
</feature>
<feature type="modified residue" description="Phosphoserine" evidence="17 18">
    <location>
        <position position="1236"/>
    </location>
</feature>
<feature type="modified residue" description="Phosphoserine" evidence="18">
    <location>
        <position position="1482"/>
    </location>
</feature>
<feature type="modified residue" description="Phosphoserine" evidence="18">
    <location>
        <position position="1491"/>
    </location>
</feature>
<feature type="modified residue" description="Phosphoserine" evidence="18">
    <location>
        <position position="1493"/>
    </location>
</feature>
<feature type="modified residue" description="Omega-N-methylarginine" evidence="19">
    <location>
        <position position="1792"/>
    </location>
</feature>
<feature type="modified residue" description="Omega-N-methylarginine" evidence="19">
    <location>
        <position position="1796"/>
    </location>
</feature>
<feature type="modified residue" description="Asymmetric dimethylarginine; alternate" evidence="19">
    <location>
        <position position="1806"/>
    </location>
</feature>
<feature type="modified residue" description="Omega-N-methylarginine; alternate" evidence="19">
    <location>
        <position position="1806"/>
    </location>
</feature>
<feature type="modified residue" description="Omega-N-methylarginine" evidence="19">
    <location>
        <position position="1818"/>
    </location>
</feature>
<feature type="modified residue" description="Phosphoserine" evidence="18">
    <location>
        <position position="1990"/>
    </location>
</feature>
<feature type="modified residue" description="Phosphoserine" evidence="18">
    <location>
        <position position="2046"/>
    </location>
</feature>
<feature type="modified residue" description="Omega-N-methylarginine" evidence="19">
    <location>
        <position position="2051"/>
    </location>
</feature>
<feature type="modified residue" description="Omega-N-methylarginine" evidence="19">
    <location>
        <position position="2081"/>
    </location>
</feature>
<feature type="modified residue" description="Asymmetric dimethylarginine" evidence="19">
    <location>
        <position position="2255"/>
    </location>
</feature>
<feature type="modified residue" description="Asymmetric dimethylarginine" evidence="19">
    <location>
        <position position="2265"/>
    </location>
</feature>
<feature type="modified residue" description="Asymmetric dimethylarginine" evidence="19">
    <location>
        <position position="2270"/>
    </location>
</feature>
<feature type="modified residue" description="Phosphoserine" evidence="17 18">
    <location>
        <position position="2578"/>
    </location>
</feature>
<feature type="modified residue" description="Phosphothreonine" evidence="17 18">
    <location>
        <position position="2595"/>
    </location>
</feature>
<feature type="modified residue" description="Phosphothreonine" evidence="17 18">
    <location>
        <position position="2622"/>
    </location>
</feature>
<feature type="modified residue" description="Phosphoserine" evidence="18">
    <location>
        <position position="2811"/>
    </location>
</feature>
<feature type="modified residue" description="Phosphoserine" evidence="18">
    <location>
        <position position="2860"/>
    </location>
</feature>
<feature type="modified residue" description="Phosphoserine" evidence="18">
    <location>
        <position position="2866"/>
    </location>
</feature>
<feature type="modified residue" description="Phosphoserine" evidence="18">
    <location>
        <position position="3022"/>
    </location>
</feature>
<feature type="modified residue" description="Phosphoserine" evidence="18">
    <location>
        <position position="3301"/>
    </location>
</feature>
<feature type="modified residue" description="Phosphoserine" evidence="17 18">
    <location>
        <position position="3382"/>
    </location>
</feature>
<feature type="modified residue" description="Omega-N-methylarginine" evidence="19">
    <location>
        <position position="3502"/>
    </location>
</feature>
<feature type="modified residue" description="Omega-N-methylarginine" evidence="19">
    <location>
        <position position="3823"/>
    </location>
</feature>
<feature type="lipid moiety-binding region" description="N-myristoyl glycine" evidence="1">
    <location>
        <position position="2"/>
    </location>
</feature>
<feature type="glycosylation site" description="O-linked (GlcNAc) threonine" evidence="1">
    <location>
        <position position="1354"/>
    </location>
</feature>
<feature type="glycosylation site" description="O-linked (GlcNAc) threonine" evidence="9">
    <location>
        <position position="1395"/>
    </location>
</feature>
<feature type="glycosylation site" description="O-linked (GlcNAc) serine" evidence="9">
    <location>
        <position position="1707"/>
    </location>
</feature>
<feature type="glycosylation site" description="O-linked (GlcNAc) threonine" evidence="9">
    <location>
        <position position="1934"/>
    </location>
</feature>
<feature type="glycosylation site" description="O-linked (GlcNAc) threonine" evidence="9">
    <location>
        <position position="2318"/>
    </location>
</feature>
<feature type="glycosylation site" description="O-linked (GlcNAc) threonine" evidence="9">
    <location>
        <position position="2524"/>
    </location>
</feature>
<feature type="glycosylation site" description="O-linked (GlcNAc) threonine" evidence="9">
    <location>
        <position position="2700"/>
    </location>
</feature>
<feature type="glycosylation site" description="O-linked (GlcNAc) threonine" evidence="9">
    <location>
        <position position="2945"/>
    </location>
</feature>
<feature type="splice variant" id="VSP_011375" description="In isoform 2." evidence="13">
    <location>
        <begin position="2831"/>
        <end position="2889"/>
    </location>
</feature>
<feature type="sequence conflict" description="In Ref. 1; CAA76598." evidence="15" ref="1">
    <original>Q</original>
    <variation>P</variation>
    <location>
        <position position="381"/>
    </location>
</feature>
<feature type="sequence conflict" description="In Ref. 1; CAA76598." evidence="15" ref="1">
    <original>M</original>
    <variation>T</variation>
    <location>
        <position position="418"/>
    </location>
</feature>
<feature type="sequence conflict" description="In Ref. 1; CAA76598." evidence="15" ref="1">
    <original>S</original>
    <variation>A</variation>
    <location>
        <position position="462"/>
    </location>
</feature>
<feature type="sequence conflict" description="In Ref. 1; CAA76598." evidence="15" ref="1">
    <original>M</original>
    <variation>V</variation>
    <location>
        <position position="473"/>
    </location>
</feature>
<feature type="sequence conflict" description="In Ref. 1; CAA76598." evidence="15" ref="1">
    <original>VTS</original>
    <variation>ATP</variation>
    <location>
        <begin position="624"/>
        <end position="626"/>
    </location>
</feature>
<feature type="sequence conflict" description="In Ref. 1; CAA76598." evidence="15" ref="1">
    <original>T</original>
    <variation>M</variation>
    <location>
        <position position="783"/>
    </location>
</feature>
<feature type="sequence conflict" description="In Ref. 1; CAA76598." evidence="15" ref="1">
    <original>A</original>
    <variation>T</variation>
    <location>
        <position position="2292"/>
    </location>
</feature>
<feature type="sequence conflict" description="In Ref. 1; CAA76598." evidence="15" ref="1">
    <original>V</original>
    <variation>A</variation>
    <location>
        <position position="2349"/>
    </location>
</feature>
<feature type="sequence conflict" description="In Ref. 1; CAA76598." evidence="15" ref="1">
    <original>A</original>
    <variation>V</variation>
    <location>
        <position position="2892"/>
    </location>
</feature>
<feature type="sequence conflict" description="In Ref. 1; CAA76598." evidence="15" ref="1">
    <original>S</original>
    <variation>G</variation>
    <location>
        <position position="3902"/>
    </location>
</feature>
<gene>
    <name evidence="16" type="primary">Bsn</name>
    <name type="synonym">Kiaa0434</name>
</gene>
<proteinExistence type="evidence at protein level"/>
<organism>
    <name type="scientific">Mus musculus</name>
    <name type="common">Mouse</name>
    <dbReference type="NCBI Taxonomy" id="10090"/>
    <lineage>
        <taxon>Eukaryota</taxon>
        <taxon>Metazoa</taxon>
        <taxon>Chordata</taxon>
        <taxon>Craniata</taxon>
        <taxon>Vertebrata</taxon>
        <taxon>Euteleostomi</taxon>
        <taxon>Mammalia</taxon>
        <taxon>Eutheria</taxon>
        <taxon>Euarchontoglires</taxon>
        <taxon>Glires</taxon>
        <taxon>Rodentia</taxon>
        <taxon>Myomorpha</taxon>
        <taxon>Muroidea</taxon>
        <taxon>Muridae</taxon>
        <taxon>Murinae</taxon>
        <taxon>Mus</taxon>
        <taxon>Mus</taxon>
    </lineage>
</organism>
<accession>O88737</accession>
<accession>E9QMZ3</accession>
<accession>Q6ZQB5</accession>
<keyword id="KW-0025">Alternative splicing</keyword>
<keyword id="KW-0966">Cell projection</keyword>
<keyword id="KW-0175">Coiled coil</keyword>
<keyword id="KW-0963">Cytoplasm</keyword>
<keyword id="KW-0968">Cytoplasmic vesicle</keyword>
<keyword id="KW-0206">Cytoskeleton</keyword>
<keyword id="KW-0325">Glycoprotein</keyword>
<keyword id="KW-0449">Lipoprotein</keyword>
<keyword id="KW-0472">Membrane</keyword>
<keyword id="KW-0479">Metal-binding</keyword>
<keyword id="KW-0488">Methylation</keyword>
<keyword id="KW-0519">Myristate</keyword>
<keyword id="KW-0597">Phosphoprotein</keyword>
<keyword id="KW-1185">Reference proteome</keyword>
<keyword id="KW-0677">Repeat</keyword>
<keyword id="KW-0770">Synapse</keyword>
<keyword id="KW-0862">Zinc</keyword>
<keyword id="KW-0863">Zinc-finger</keyword>
<protein>
    <recommendedName>
        <fullName evidence="14 15">Protein bassoon</fullName>
    </recommendedName>
</protein>
<comment type="function">
    <text evidence="2 3 4 7 8 11 12">Scaffold protein of the presynaptic cytomatrix at the active zone (CAZ) which is the place in the synapse where neurotransmitter is released (PubMed:12628168, PubMed:12628169, PubMed:19812333). After synthesis, participates in the formation of Golgi-derived membranous organelles termed Piccolo-Bassoon transport vesicles (PTVs) that are transported along axons to sites of nascent synaptic contacts (By similarity). At the presynaptic active zone, regulates the spatial organization of synaptic vesicle cluster, the protein complexes that execute membrane fusion and compensatory endocytosis (By similarity). Also functions in processes other than assembly such as the regulation of specific presynaptic protein ubiquitination by interacting with SIAH1 or the regulation of presynaptic autophagy by associating with ATG5 (By similarity) (PubMed:28231469). Also mediates synapse to nucleus communication leading to reconfiguration of gene expression by associating with the transcriptional corepressor CTBP1 and by subsequently reducing the size of its pool available for nuclear import (By similarity). Inhibits the activity of the proportion of DAO enzyme that localizes to the presynaptic active zone, which may modulate synaptic transmission (By similarity).</text>
</comment>
<comment type="subunit">
    <text evidence="3 4 10 11 12">Interacts with PCLO, ERC2/CAST1, RIMS1 and UNC13A (PubMed:19812333). Interacts with TPRG1L (PubMed:17869247). Interacts with DYNLL1 and DYNLL2; these interactions potentially link PTVs to dynein and myosin V motor complexes (By similarity). Interacts with ATG5; this interaction is important for the regulation of presynaptic autophagy (PubMed:28231469). Interacts (via C-terminus) with TRIO (via N-terminus) (By similarity). Interacts with CTBP1 (By similarity). Interacts with SIAH1; this interaction negatively regulates SIAH1 E3 ligase activity (By similarity). Interacts (via coiled region) with DAO; the interaction is direct (By similarity).</text>
</comment>
<comment type="subcellular location">
    <subcellularLocation>
        <location evidence="3">Cytoplasm</location>
    </subcellularLocation>
    <subcellularLocation>
        <location evidence="7 8">Presynaptic active zone</location>
    </subcellularLocation>
    <subcellularLocation>
        <location evidence="3">Cytoplasm</location>
        <location evidence="3">Cytoskeleton</location>
    </subcellularLocation>
    <subcellularLocation>
        <location evidence="8">Cytoplasmic vesicle</location>
        <location evidence="8">Secretory vesicle</location>
        <location evidence="8">Synaptic vesicle membrane</location>
        <topology evidence="3">Peripheral membrane protein</topology>
    </subcellularLocation>
    <text evidence="3">In retina, is localized in the outer plexiform layer at ribbon synapses formed by rods and cones but was absent from basal synaptic contacts formed by cones. In the retinal inner plexiform layer localized to conventional inhibitory GABAergic synapses, made by amacrine cells, but absent from the bipolar cell ribbon synapses (By similarity).</text>
</comment>
<comment type="alternative products">
    <event type="alternative splicing"/>
    <isoform>
        <id>O88737-1</id>
        <name>1</name>
        <sequence type="displayed"/>
    </isoform>
    <isoform>
        <id>O88737-2</id>
        <name>2</name>
        <sequence type="described" ref="VSP_011375"/>
    </isoform>
</comment>
<comment type="tissue specificity">
    <text evidence="7 8 11">Expressed in brain and retina.</text>
</comment>
<comment type="PTM">
    <text evidence="1">Myristoylated. The N-terminal myristoylation is not sufficient for presynaptic localization (By similarity).</text>
</comment>
<comment type="disruption phenotype">
    <text evidence="7 12">Mice show a reduced excitability attributed to inactivation of a fraction of brain glutamatergic synapses. At these synapses, vesicles are clustered and docked in normal numbers, but were unable to fuse. In retina, mutants lacking functional BSN showed normal retinal anatomy, but synapses lacked anchoring of the photoreceptor ribbon to the presynaptic active zone resulting in impaired photoreceptor synaptic transmission (PubMed:12628168). Knockdown of both Bassoon/BSN and Piccolo/PCLO leads to the formation of presynaptic autophagosomes.</text>
</comment>
<comment type="miscellaneous">
    <molecule>Isoform 2</molecule>
    <text evidence="15">Incompl.</text>
</comment>
<sequence length="3942" mass="418843">MGNEASLEGGAGEGPLPPGGSGLGPGPGAGKPPSALAGGGQLPVAGAARAAGPPTPGLGPVPGPGPGPGPGSVPRRLDPKEPLGSQRTTSPTPKQASATAPGRESPRETRAQGPSGQEAESPRRTLQVDSRTQRSGRSPSVSPDRGSTPTSPYSVPQIAPLPSSTLCPICKTSDLTSTPSQPNFNTCTQCHNKVCNQCGFNPNPHLTQVKEWLCLNCQMQRALGMDMTTAPRSKSQQQLHSPALSPAHSPAKQPLGKPEQERSPRGPGATQSGPRQAEAARATSVPGPTQATAPPEVGRVSPQPPLSTKPSTAEPRPPAGEAQGKSATTVPSGLGAGEQTQEGLTGKLFGLGASLLTQASTLMSVQPEADTQGQPSPSKGQPKIVFSDASKEAGPRPPGSGPGPGPTPGAKTEPGARMGPGSGPGALAKTGGTASPKHGRAEHQAASKAAAKPKTMPKERASACPLCQAELNMGSRGPANYNTCTACKLQVCNLCGFNPTPHLVEKTEWLCLNCQTKRLLEGSLGEPAPLPLPTPQQPPAGVPHRAAGAAPLKQKGPQGLGQPSGSLPAKASPQATKASPQATKASPQATKASPQTTKASPQAKPLRATEPSKTSSSAQEKKTVTSAKAEPVPKPPPETTVPPGTPKAKSGVKRTDPATPVVKPVPEAPKGGEAEEPVPKPYSQDLSRSPQSLSDTGYSSDGVSSSQSEITGVVQQEVEQLDSAGVTGPRPPSPSELHKVGSSLRPSLEAQAVAPSAEWSKPPRSSSSAVEDQKRRPHSLSITPEAFDSDEELGDILEEDDSLAWGRQREQQDTAESSDDFGSQLRHDYVEDSSEGGLSPLPPQPPARADMTDEEFMRRQILEMSAEEDNLEEDDTAVSGRGLAKHSAQKASARPRPESSQEPKRRLPHNATTGYEELLSEAGPAEPTDSSGALQGGLRRFKTIELNSTGSYGHELDLGQGPDPNLDREPELEMESLTGSPEDRSRGEHSSTLPASTPSYTSGTSPTSLSSLEEDSDSSPSRRQRLEEAKQQRKARHRSHGPLLPTIEDSSEEEELREEEELLREQEKMREVEQQRIRSTARKTRRDKEELRAQRRRERSKTPPSNLSPIEDASPTEELRQAAEMEELHRSSCSEYSPSPSLDSEAETLDGGPTRLYKSGSEYNLPAFMSLYSPTETPSGSSTTPSSGRPLKSAEEAYEDMMRKAEMLQRQQGQVAGARGPHGGPSQPTGPRSQGSFEYQDTQDHDYGGRASQPVAESTPAGLGAAVYEEILQTSQSIARMRQASSRDLGFTEDKKKEKQFLNAESAYMDPMKQNGGPLTPGTSPTQLAAPVSFSTSTSSDSSGGRVIPDVRVTQHFAKEPQDPLKLHSSPVSSTLTSKEVGMTFSQGPGSPATTASPTRGYMTPTSPAGSERSPSTSSTIHSYGQPPTTANYGSQTEELPHAPSGPPGSGRAPREKPLSGGDSEVGAPQPSRGYSYFTGSSPPLSPSTPSESPTFSPGKLGPRATAEFSTQTPSLTLSSDIPRSPGPPSPMVAQGTQTPHRPSTPRLVWQQSSQEAPIMVITLASDASSQTRMVHASASTSPLCSPTDSQPTSHSYSQTTPPSASQMPSEPAGPPGFPRAPSAGTDGPLALYGWGALPAENISLCRISSVPGTSRVEPGPRPPGTAVVDLRTAVKPTPIILTDQGMDLTSLAVEARKYGLALDPVSGRQSTAVQPLVINLNAQEQTHTFLATATTVSITMASSVLMAQQKQPVVYGDPFQSRLDFGQGSGSPVCLAQVKQVEQAVQTAPYRGGPRGRPREAKFARYNLPNQVTPLARRDILITQMGTAQGVGLKPGPVPEPGAEPHRATPAELRSHAPPGTRKPHTVVVQMGEGTAGTVTTLLPEEPAGALDLTGMRPESQLACCDMVYKFPFGSSCTGTFHPAPSAPDKSVTDTALPGQSSGPFYSPRDPEPPEPLTFRTQGVVGPGPHEEQRPYPQGLPGRLYSSMSDTNLAEAGLNYHAQRLGQLFQGPGRDSAVDLSSLKHSYSLGFADGRYLGQGLQYGSFTDLRHPTDLLSHPLPLRRYSSVSNIYSDHRYGPRGDAVGFQEASLAQYSATTAREISRMCAALNSMDQYGGRHGSGSGGPDLVQYQPQHGPGLSAPQGLAPLRSGLLGNPTYPEGQPSPGNLAQYGPAASQATAVRQLLPSTATVRAADGMIYSTINTPIAATLPITTQPASVLRPMVRGGMYRPYVSGGVTAVPLTSLTRVPMIAPRVPLGPAGLYRYPAPRFPIASSVPPAEGPVYLGKPAAAKASGAGGPPRPELPAGVAREEPFSTTAPAVIKEAPVAPAPGPAPAPPPGQKPAGEAVAGSGSGVLSRPASEKEEASQEDRQRKQQEQLLQLERERVELEKLRQLRLQEELERERVELQRHREEEQLLVQRELQELQTIKQHVLQQQQEERQAQFALQREQLAQQRLQLEQIQQLQQQLQLQLEEQKQRQKAPFPATCEAPSRGPPPAATELAQNGQYWPPLTHAAFIAVAGTEGPGQPREPVLHRGLPSSASDMSLQTEEQWEAGRSGIKKRHSMPRLRDACEPESGPDPSTVRRIADSSVQTDDEEGEGRYLVTRRRRTRRSADCSVQTDDEDNADWEQPVRRRRSRLSRHSDSGSDSKHDATASSSTTAAATARAMSSVGIQTISDCSVQTEPEQLPRVSPAIHITAATDPKVEIVRYISAPEKTGRGESLACQTEPDGQAQGVAGPQLIGPTAISPYLPGIQIVTPGALGRFEKKKPDPLEIGYQAHLPPESLSQLVSRQPPKSPQVLYSPVSPLSPHRLLDTSFASSERLNKAHVSPQKQFIADSTLRQQTLPRPMKTLQRSLSDPKPLSPTAEESAKERFSLYQHQGGLGSQVSALPPNGLVRKVKRTLPSPPPEEAHLPLAGQVPSQLYAASLLQRGLAGPTTVPATKASLLRELDRDLRLVEHESTKLRKKQAELDEEEKEIDAKLKYLELGITQRKESLAKDRGGRDYPPLRGLGEHRDYLSDSELNQLRLQGCTTPAGQYVDYPASAAVPATPSGPTAFQQPRFPPAAPQYTAGSSGPTQNGFPAHQAPTYTGPSTYPAPTYPPGTGYPAEPGLPSQPAFHPTGHYAAPTPMPTTQSAPFPVQADSRAAHQKPRQTSLADLEQKVPTNYEVIGSPAVTMSSAPPETGYSGPAVSGSYEQGKAPEHPRGSDRSSVSQSPAPTYPSDSHYTSLEQNVPRNYVMIDDISELTKDSTPTASESQRLEPLGPGGVSGRPGKDPGEPAVLEGPTLPCCYGRGEEESEEDSYDPRGKSGHHRSMESNGRPSTHYYGDSDYRHGARADKYGPGPMGPKHPSKSLAPAAISSKRSKHRKQGMEQKISKFSPIEEAKDVESDLASYPPPTVSSSLTSRGRKFQDEITYGLKKNVYEQQRYYGVSSRDAAEEDERMYGSSSRSRMASAYSGEKLSSHDYSSRGKGYERERDTAERLQKAGSKPSSLSMAHGRARPPMRSQASEEESPVSPLGRPRPAGGALPPGDTCPQFCSSHSMPDVQEHVKDGPRAHAYKREEGYMLDDSHCVVSDSEAYHLGQEETDWFDKPRDARSDRFRHHGGHTVSSSQKRGPARHSYHDYDEPPEEGLWPHDEGGPGRHTSAKEHRHHSDHGRHSGRHAGEEPGRRAAKPHARDMGRHEARPHPQASPAPAMQKKGQPGYPSSADYSQSSRAPSAYHHASESKKGSRQAHTGPSALQPKADTQAQPQMQGRQAAPGPQQSQPPSSRQTPSGTASRQPQTQQQQQQQQQQQGLGQQAPQQAPSQARLQPQSQPTTRGTAPAASQPAGKPQPGPTTAPGPQPAGPPRAEQASSSKPPAAKAPQQGRAPQAQTTPGPGPAGAKPGARPGGTPGAPASQPGAEGESVFSKILPGGAAEQAGKLTEAVSAFGKKFSSFW</sequence>
<evidence type="ECO:0000250" key="1"/>
<evidence type="ECO:0000250" key="2">
    <source>
        <dbReference type="UniProtKB" id="O35078"/>
    </source>
</evidence>
<evidence type="ECO:0000250" key="3">
    <source>
        <dbReference type="UniProtKB" id="O88778"/>
    </source>
</evidence>
<evidence type="ECO:0000250" key="4">
    <source>
        <dbReference type="UniProtKB" id="Q9UPA5"/>
    </source>
</evidence>
<evidence type="ECO:0000255" key="5"/>
<evidence type="ECO:0000256" key="6">
    <source>
        <dbReference type="SAM" id="MobiDB-lite"/>
    </source>
</evidence>
<evidence type="ECO:0000269" key="7">
    <source>
    </source>
</evidence>
<evidence type="ECO:0000269" key="8">
    <source>
    </source>
</evidence>
<evidence type="ECO:0000269" key="9">
    <source>
    </source>
</evidence>
<evidence type="ECO:0000269" key="10">
    <source>
    </source>
</evidence>
<evidence type="ECO:0000269" key="11">
    <source>
    </source>
</evidence>
<evidence type="ECO:0000269" key="12">
    <source>
    </source>
</evidence>
<evidence type="ECO:0000303" key="13">
    <source>
    </source>
</evidence>
<evidence type="ECO:0000303" key="14">
    <source>
    </source>
</evidence>
<evidence type="ECO:0000305" key="15"/>
<evidence type="ECO:0000312" key="16">
    <source>
        <dbReference type="MGI" id="MGI:1277955"/>
    </source>
</evidence>
<evidence type="ECO:0007744" key="17">
    <source>
    </source>
</evidence>
<evidence type="ECO:0007744" key="18">
    <source>
    </source>
</evidence>
<evidence type="ECO:0007744" key="19">
    <source>
    </source>
</evidence>